<evidence type="ECO:0000255" key="1">
    <source>
        <dbReference type="HAMAP-Rule" id="MF_00785"/>
    </source>
</evidence>
<sequence>MYGVLLVLHGSKIKEWQDVAIQYANLLRKYFDLVEYGFIEFNQPSITEAAKKLASNGVDTIIVVPLLFAAGTHFKRDIPKQLEEIKGVKIMIAEPIGVDERIAEILKERVEEVLRSSTRS</sequence>
<dbReference type="EC" id="4.99.1.3" evidence="1"/>
<dbReference type="EMBL" id="BA000023">
    <property type="protein sequence ID" value="BAB65364.1"/>
    <property type="molecule type" value="Genomic_DNA"/>
</dbReference>
<dbReference type="RefSeq" id="WP_010978347.1">
    <property type="nucleotide sequence ID" value="NC_003106.2"/>
</dbReference>
<dbReference type="SMR" id="Q975N6"/>
<dbReference type="STRING" id="273063.STK_03830"/>
<dbReference type="GeneID" id="1458308"/>
<dbReference type="KEGG" id="sto:STK_03830"/>
<dbReference type="PATRIC" id="fig|273063.9.peg.444"/>
<dbReference type="eggNOG" id="arCOG02246">
    <property type="taxonomic scope" value="Archaea"/>
</dbReference>
<dbReference type="OrthoDB" id="11653at2157"/>
<dbReference type="UniPathway" id="UPA00148">
    <property type="reaction ID" value="UER00223"/>
</dbReference>
<dbReference type="Proteomes" id="UP000001015">
    <property type="component" value="Chromosome"/>
</dbReference>
<dbReference type="GO" id="GO:0050897">
    <property type="term" value="F:cobalt ion binding"/>
    <property type="evidence" value="ECO:0007669"/>
    <property type="project" value="UniProtKB-UniRule"/>
</dbReference>
<dbReference type="GO" id="GO:0016852">
    <property type="term" value="F:sirohydrochlorin cobaltochelatase activity"/>
    <property type="evidence" value="ECO:0007669"/>
    <property type="project" value="UniProtKB-UniRule"/>
</dbReference>
<dbReference type="GO" id="GO:0019251">
    <property type="term" value="P:anaerobic cobalamin biosynthetic process"/>
    <property type="evidence" value="ECO:0007669"/>
    <property type="project" value="UniProtKB-UniRule"/>
</dbReference>
<dbReference type="CDD" id="cd03416">
    <property type="entry name" value="CbiX_SirB_N"/>
    <property type="match status" value="1"/>
</dbReference>
<dbReference type="Gene3D" id="3.40.50.1400">
    <property type="match status" value="1"/>
</dbReference>
<dbReference type="HAMAP" id="MF_00785">
    <property type="entry name" value="CbiX"/>
    <property type="match status" value="1"/>
</dbReference>
<dbReference type="InterPro" id="IPR002762">
    <property type="entry name" value="CbiX-like"/>
</dbReference>
<dbReference type="InterPro" id="IPR023652">
    <property type="entry name" value="SiroHydchlorin_Cochelatase"/>
</dbReference>
<dbReference type="InterPro" id="IPR050963">
    <property type="entry name" value="Sirohydro_Cobaltochel/CbiX"/>
</dbReference>
<dbReference type="PANTHER" id="PTHR33542">
    <property type="entry name" value="SIROHYDROCHLORIN FERROCHELATASE, CHLOROPLASTIC"/>
    <property type="match status" value="1"/>
</dbReference>
<dbReference type="PANTHER" id="PTHR33542:SF3">
    <property type="entry name" value="SIROHYDROCHLORIN FERROCHELATASE, CHLOROPLASTIC"/>
    <property type="match status" value="1"/>
</dbReference>
<dbReference type="Pfam" id="PF01903">
    <property type="entry name" value="CbiX"/>
    <property type="match status" value="1"/>
</dbReference>
<dbReference type="SUPFAM" id="SSF53800">
    <property type="entry name" value="Chelatase"/>
    <property type="match status" value="1"/>
</dbReference>
<reference key="1">
    <citation type="journal article" date="2001" name="DNA Res.">
        <title>Complete genome sequence of an aerobic thermoacidophilic Crenarchaeon, Sulfolobus tokodaii strain7.</title>
        <authorList>
            <person name="Kawarabayasi Y."/>
            <person name="Hino Y."/>
            <person name="Horikawa H."/>
            <person name="Jin-no K."/>
            <person name="Takahashi M."/>
            <person name="Sekine M."/>
            <person name="Baba S."/>
            <person name="Ankai A."/>
            <person name="Kosugi H."/>
            <person name="Hosoyama A."/>
            <person name="Fukui S."/>
            <person name="Nagai Y."/>
            <person name="Nishijima K."/>
            <person name="Otsuka R."/>
            <person name="Nakazawa H."/>
            <person name="Takamiya M."/>
            <person name="Kato Y."/>
            <person name="Yoshizawa T."/>
            <person name="Tanaka T."/>
            <person name="Kudoh Y."/>
            <person name="Yamazaki J."/>
            <person name="Kushida N."/>
            <person name="Oguchi A."/>
            <person name="Aoki K."/>
            <person name="Masuda S."/>
            <person name="Yanagii M."/>
            <person name="Nishimura M."/>
            <person name="Yamagishi A."/>
            <person name="Oshima T."/>
            <person name="Kikuchi H."/>
        </authorList>
    </citation>
    <scope>NUCLEOTIDE SEQUENCE [LARGE SCALE GENOMIC DNA]</scope>
    <source>
        <strain>DSM 16993 / JCM 10545 / NBRC 100140 / 7</strain>
    </source>
</reference>
<keyword id="KW-0169">Cobalamin biosynthesis</keyword>
<keyword id="KW-0170">Cobalt</keyword>
<keyword id="KW-0456">Lyase</keyword>
<keyword id="KW-0479">Metal-binding</keyword>
<keyword id="KW-1185">Reference proteome</keyword>
<feature type="chain" id="PRO_0000150363" description="Sirohydrochlorin cobaltochelatase">
    <location>
        <begin position="1"/>
        <end position="120"/>
    </location>
</feature>
<feature type="active site" description="Proton acceptor" evidence="1">
    <location>
        <position position="9"/>
    </location>
</feature>
<feature type="binding site" evidence="1">
    <location>
        <position position="9"/>
    </location>
    <ligand>
        <name>Co(2+)</name>
        <dbReference type="ChEBI" id="CHEBI:48828"/>
    </ligand>
</feature>
<feature type="binding site" evidence="1">
    <location>
        <position position="43"/>
    </location>
    <ligand>
        <name>substrate</name>
    </ligand>
</feature>
<feature type="binding site" evidence="1">
    <location>
        <begin position="68"/>
        <end position="73"/>
    </location>
    <ligand>
        <name>substrate</name>
    </ligand>
</feature>
<feature type="binding site" evidence="1">
    <location>
        <position position="73"/>
    </location>
    <ligand>
        <name>Co(2+)</name>
        <dbReference type="ChEBI" id="CHEBI:48828"/>
    </ligand>
</feature>
<accession>Q975N6</accession>
<protein>
    <recommendedName>
        <fullName evidence="1">Sirohydrochlorin cobaltochelatase</fullName>
        <ecNumber evidence="1">4.99.1.3</ecNumber>
    </recommendedName>
    <alternativeName>
        <fullName evidence="1">CbiXS</fullName>
    </alternativeName>
</protein>
<gene>
    <name evidence="1" type="primary">cbiX</name>
    <name type="ordered locus">STK_03830</name>
</gene>
<comment type="function">
    <text evidence="1">Catalyzes the insertion of Co(2+) into sirohydrochlorin as part of the anaerobic pathway to cobalamin biosynthesis.</text>
</comment>
<comment type="catalytic activity">
    <reaction evidence="1">
        <text>Co-sirohydrochlorin + 2 H(+) = sirohydrochlorin + Co(2+)</text>
        <dbReference type="Rhea" id="RHEA:15893"/>
        <dbReference type="ChEBI" id="CHEBI:15378"/>
        <dbReference type="ChEBI" id="CHEBI:48828"/>
        <dbReference type="ChEBI" id="CHEBI:58351"/>
        <dbReference type="ChEBI" id="CHEBI:60049"/>
        <dbReference type="EC" id="4.99.1.3"/>
    </reaction>
</comment>
<comment type="pathway">
    <text evidence="1">Cofactor biosynthesis; adenosylcobalamin biosynthesis; cob(II)yrinate a,c-diamide from sirohydrochlorin (anaerobic route): step 1/10.</text>
</comment>
<comment type="subunit">
    <text evidence="1">Homotetramer; dimer of dimers.</text>
</comment>
<comment type="similarity">
    <text evidence="1">Belongs to the CbiX family. CbiXS subfamily.</text>
</comment>
<proteinExistence type="inferred from homology"/>
<name>CBIX_SULTO</name>
<organism>
    <name type="scientific">Sulfurisphaera tokodaii (strain DSM 16993 / JCM 10545 / NBRC 100140 / 7)</name>
    <name type="common">Sulfolobus tokodaii</name>
    <dbReference type="NCBI Taxonomy" id="273063"/>
    <lineage>
        <taxon>Archaea</taxon>
        <taxon>Thermoproteota</taxon>
        <taxon>Thermoprotei</taxon>
        <taxon>Sulfolobales</taxon>
        <taxon>Sulfolobaceae</taxon>
        <taxon>Sulfurisphaera</taxon>
    </lineage>
</organism>